<dbReference type="EMBL" id="AF488600">
    <property type="status" value="NOT_ANNOTATED_CDS"/>
    <property type="molecule type" value="mRNA"/>
</dbReference>
<dbReference type="EMBL" id="AL138642">
    <property type="protein sequence ID" value="CAB71902.1"/>
    <property type="status" value="ALT_SEQ"/>
    <property type="molecule type" value="Genomic_DNA"/>
</dbReference>
<dbReference type="EMBL" id="CP002686">
    <property type="protein sequence ID" value="AEE80283.1"/>
    <property type="molecule type" value="Genomic_DNA"/>
</dbReference>
<dbReference type="EMBL" id="CP002686">
    <property type="protein sequence ID" value="AEE80284.1"/>
    <property type="molecule type" value="Genomic_DNA"/>
</dbReference>
<dbReference type="EMBL" id="AK118527">
    <property type="protein sequence ID" value="BAC43130.1"/>
    <property type="molecule type" value="mRNA"/>
</dbReference>
<dbReference type="EMBL" id="BT005298">
    <property type="protein sequence ID" value="AAO63362.1"/>
    <property type="molecule type" value="mRNA"/>
</dbReference>
<dbReference type="EMBL" id="AJ630481">
    <property type="protein sequence ID" value="CAG25854.1"/>
    <property type="molecule type" value="mRNA"/>
</dbReference>
<dbReference type="EMBL" id="AY568653">
    <property type="protein sequence ID" value="AAS79543.1"/>
    <property type="molecule type" value="mRNA"/>
</dbReference>
<dbReference type="EMBL" id="AY088741">
    <property type="protein sequence ID" value="AAM67059.1"/>
    <property type="molecule type" value="mRNA"/>
</dbReference>
<dbReference type="PIR" id="T47987">
    <property type="entry name" value="T47987"/>
</dbReference>
<dbReference type="RefSeq" id="NP_567121.1">
    <molecule id="Q700E4-1"/>
    <property type="nucleotide sequence ID" value="NM_116060.3"/>
</dbReference>
<dbReference type="RefSeq" id="NP_850735.1">
    <molecule id="Q700E4-2"/>
    <property type="nucleotide sequence ID" value="NM_180404.4"/>
</dbReference>
<dbReference type="SMR" id="Q700E4"/>
<dbReference type="BioGRID" id="10682">
    <property type="interactions" value="5"/>
</dbReference>
<dbReference type="FunCoup" id="Q700E4">
    <property type="interactions" value="90"/>
</dbReference>
<dbReference type="IntAct" id="Q700E4">
    <property type="interactions" value="4"/>
</dbReference>
<dbReference type="STRING" id="3702.Q700E4"/>
<dbReference type="iPTMnet" id="Q700E4"/>
<dbReference type="PaxDb" id="3702-AT3G61950.1"/>
<dbReference type="ProteomicsDB" id="240876">
    <molecule id="Q700E4-1"/>
</dbReference>
<dbReference type="EnsemblPlants" id="AT3G61950.1">
    <molecule id="Q700E4-1"/>
    <property type="protein sequence ID" value="AT3G61950.1"/>
    <property type="gene ID" value="AT3G61950"/>
</dbReference>
<dbReference type="EnsemblPlants" id="AT3G61950.2">
    <molecule id="Q700E4-2"/>
    <property type="protein sequence ID" value="AT3G61950.2"/>
    <property type="gene ID" value="AT3G61950"/>
</dbReference>
<dbReference type="GeneID" id="825368"/>
<dbReference type="Gramene" id="AT3G61950.1">
    <molecule id="Q700E4-1"/>
    <property type="protein sequence ID" value="AT3G61950.1"/>
    <property type="gene ID" value="AT3G61950"/>
</dbReference>
<dbReference type="Gramene" id="AT3G61950.2">
    <molecule id="Q700E4-2"/>
    <property type="protein sequence ID" value="AT3G61950.2"/>
    <property type="gene ID" value="AT3G61950"/>
</dbReference>
<dbReference type="KEGG" id="ath:AT3G61950"/>
<dbReference type="Araport" id="AT3G61950"/>
<dbReference type="TAIR" id="AT3G61950">
    <property type="gene designation" value="MYC67"/>
</dbReference>
<dbReference type="eggNOG" id="ENOG502QSKY">
    <property type="taxonomic scope" value="Eukaryota"/>
</dbReference>
<dbReference type="InParanoid" id="Q700E4"/>
<dbReference type="PhylomeDB" id="Q700E4"/>
<dbReference type="PRO" id="PR:Q700E4"/>
<dbReference type="Proteomes" id="UP000006548">
    <property type="component" value="Chromosome 3"/>
</dbReference>
<dbReference type="ExpressionAtlas" id="Q700E4">
    <property type="expression patterns" value="baseline and differential"/>
</dbReference>
<dbReference type="GO" id="GO:0005634">
    <property type="term" value="C:nucleus"/>
    <property type="evidence" value="ECO:0007669"/>
    <property type="project" value="UniProtKB-SubCell"/>
</dbReference>
<dbReference type="GO" id="GO:0003677">
    <property type="term" value="F:DNA binding"/>
    <property type="evidence" value="ECO:0007669"/>
    <property type="project" value="UniProtKB-KW"/>
</dbReference>
<dbReference type="GO" id="GO:0003700">
    <property type="term" value="F:DNA-binding transcription factor activity"/>
    <property type="evidence" value="ECO:0000250"/>
    <property type="project" value="TAIR"/>
</dbReference>
<dbReference type="GO" id="GO:0042803">
    <property type="term" value="F:protein homodimerization activity"/>
    <property type="evidence" value="ECO:0000353"/>
    <property type="project" value="TAIR"/>
</dbReference>
<dbReference type="GO" id="GO:0009631">
    <property type="term" value="P:cold acclimation"/>
    <property type="evidence" value="ECO:0000315"/>
    <property type="project" value="TAIR"/>
</dbReference>
<dbReference type="GO" id="GO:0010052">
    <property type="term" value="P:guard cell differentiation"/>
    <property type="evidence" value="ECO:0007669"/>
    <property type="project" value="InterPro"/>
</dbReference>
<dbReference type="GO" id="GO:0006355">
    <property type="term" value="P:regulation of DNA-templated transcription"/>
    <property type="evidence" value="ECO:0000304"/>
    <property type="project" value="TAIR"/>
</dbReference>
<dbReference type="CDD" id="cd11448">
    <property type="entry name" value="bHLH_AtFAMA_like"/>
    <property type="match status" value="1"/>
</dbReference>
<dbReference type="Gene3D" id="4.10.280.10">
    <property type="entry name" value="Helix-loop-helix DNA-binding domain"/>
    <property type="match status" value="1"/>
</dbReference>
<dbReference type="InterPro" id="IPR054502">
    <property type="entry name" value="bHLH-TF_ACT-like_plant"/>
</dbReference>
<dbReference type="InterPro" id="IPR011598">
    <property type="entry name" value="bHLH_dom"/>
</dbReference>
<dbReference type="InterPro" id="IPR044283">
    <property type="entry name" value="FAMA/SPEECHLESS/MUTE-like"/>
</dbReference>
<dbReference type="InterPro" id="IPR036638">
    <property type="entry name" value="HLH_DNA-bd_sf"/>
</dbReference>
<dbReference type="PANTHER" id="PTHR46684:SF16">
    <property type="entry name" value="TRANSCRIPTION FACTOR BHLH67-LIKE ISOFORM X2"/>
    <property type="match status" value="1"/>
</dbReference>
<dbReference type="PANTHER" id="PTHR46684">
    <property type="entry name" value="TRANSCRIPTION FACTOR FAMA"/>
    <property type="match status" value="1"/>
</dbReference>
<dbReference type="Pfam" id="PF22754">
    <property type="entry name" value="bHLH-TF_ACT-like_plant"/>
    <property type="match status" value="1"/>
</dbReference>
<dbReference type="Pfam" id="PF00010">
    <property type="entry name" value="HLH"/>
    <property type="match status" value="1"/>
</dbReference>
<dbReference type="SMART" id="SM00353">
    <property type="entry name" value="HLH"/>
    <property type="match status" value="1"/>
</dbReference>
<dbReference type="SUPFAM" id="SSF47459">
    <property type="entry name" value="HLH, helix-loop-helix DNA-binding domain"/>
    <property type="match status" value="1"/>
</dbReference>
<dbReference type="PROSITE" id="PS50888">
    <property type="entry name" value="BHLH"/>
    <property type="match status" value="1"/>
</dbReference>
<gene>
    <name type="primary">BHLH67</name>
    <name type="synonym">EN11</name>
    <name type="ordered locus">At3g61950</name>
    <name type="ORF">F21F14.120</name>
</gene>
<protein>
    <recommendedName>
        <fullName>Transcription factor bHLH67</fullName>
    </recommendedName>
    <alternativeName>
        <fullName>Basic helix-loop-helix protein 67</fullName>
        <shortName>AtbHLH67</shortName>
        <shortName>bHLH 67</shortName>
    </alternativeName>
    <alternativeName>
        <fullName>Transcription factor EN 11</fullName>
    </alternativeName>
    <alternativeName>
        <fullName>bHLH transcription factor bHLH067</fullName>
    </alternativeName>
</protein>
<feature type="chain" id="PRO_0000358761" description="Transcription factor bHLH67">
    <location>
        <begin position="1"/>
        <end position="358"/>
    </location>
</feature>
<feature type="domain" description="bHLH" evidence="1">
    <location>
        <begin position="175"/>
        <end position="226"/>
    </location>
</feature>
<feature type="region of interest" description="Disordered" evidence="2">
    <location>
        <begin position="125"/>
        <end position="176"/>
    </location>
</feature>
<feature type="compositionally biased region" description="Low complexity" evidence="2">
    <location>
        <begin position="127"/>
        <end position="137"/>
    </location>
</feature>
<feature type="compositionally biased region" description="Basic residues" evidence="2">
    <location>
        <begin position="157"/>
        <end position="166"/>
    </location>
</feature>
<feature type="splice variant" id="VSP_036090" description="In isoform 2." evidence="4 5 6">
    <location>
        <begin position="1"/>
        <end position="51"/>
    </location>
</feature>
<feature type="sequence conflict" description="In Ref. 7; AAM67059." evidence="7" ref="7">
    <original>P</original>
    <variation>L</variation>
    <location>
        <position position="48"/>
    </location>
</feature>
<feature type="sequence conflict" description="In Ref. 7; AAM67059." evidence="7" ref="7">
    <original>S</original>
    <variation>L</variation>
    <location>
        <position position="256"/>
    </location>
</feature>
<feature type="sequence conflict" description="In Ref. 1; AF488600." evidence="7" ref="1">
    <original>C</original>
    <variation>R</variation>
    <location>
        <position position="272"/>
    </location>
</feature>
<name>BH067_ARATH</name>
<evidence type="ECO:0000255" key="1">
    <source>
        <dbReference type="PROSITE-ProRule" id="PRU00981"/>
    </source>
</evidence>
<evidence type="ECO:0000256" key="2">
    <source>
        <dbReference type="SAM" id="MobiDB-lite"/>
    </source>
</evidence>
<evidence type="ECO:0000269" key="3">
    <source>
    </source>
</evidence>
<evidence type="ECO:0000303" key="4">
    <source>
    </source>
</evidence>
<evidence type="ECO:0000303" key="5">
    <source>
    </source>
</evidence>
<evidence type="ECO:0000303" key="6">
    <source>
    </source>
</evidence>
<evidence type="ECO:0000305" key="7"/>
<organism>
    <name type="scientific">Arabidopsis thaliana</name>
    <name type="common">Mouse-ear cress</name>
    <dbReference type="NCBI Taxonomy" id="3702"/>
    <lineage>
        <taxon>Eukaryota</taxon>
        <taxon>Viridiplantae</taxon>
        <taxon>Streptophyta</taxon>
        <taxon>Embryophyta</taxon>
        <taxon>Tracheophyta</taxon>
        <taxon>Spermatophyta</taxon>
        <taxon>Magnoliopsida</taxon>
        <taxon>eudicotyledons</taxon>
        <taxon>Gunneridae</taxon>
        <taxon>Pentapetalae</taxon>
        <taxon>rosids</taxon>
        <taxon>malvids</taxon>
        <taxon>Brassicales</taxon>
        <taxon>Brassicaceae</taxon>
        <taxon>Camelineae</taxon>
        <taxon>Arabidopsis</taxon>
    </lineage>
</organism>
<keyword id="KW-0025">Alternative splicing</keyword>
<keyword id="KW-0238">DNA-binding</keyword>
<keyword id="KW-0539">Nucleus</keyword>
<keyword id="KW-1185">Reference proteome</keyword>
<keyword id="KW-0804">Transcription</keyword>
<keyword id="KW-0805">Transcription regulation</keyword>
<accession>Q700E4</accession>
<accession>Q8GWZ9</accession>
<accession>Q8L8Y1</accession>
<accession>Q9M270</accession>
<proteinExistence type="evidence at transcript level"/>
<comment type="subunit">
    <text evidence="7">Homodimer.</text>
</comment>
<comment type="subcellular location">
    <subcellularLocation>
        <location evidence="1">Nucleus</location>
    </subcellularLocation>
</comment>
<comment type="alternative products">
    <event type="alternative splicing"/>
    <isoform>
        <id>Q700E4-1</id>
        <name>1</name>
        <sequence type="displayed"/>
    </isoform>
    <isoform>
        <id>Q700E4-2</id>
        <name>2</name>
        <sequence type="described" ref="VSP_036090"/>
    </isoform>
</comment>
<comment type="tissue specificity">
    <text evidence="3">Expressed constitutively in roots, leaves, stems, and flowers.</text>
</comment>
<comment type="miscellaneous">
    <molecule>Isoform 2</molecule>
    <text evidence="7">May be due to an intron retention.</text>
</comment>
<comment type="sequence caution" evidence="7">
    <conflict type="erroneous gene model prediction">
        <sequence resource="EMBL-CDS" id="CAB71902"/>
    </conflict>
</comment>
<reference key="1">
    <citation type="journal article" date="2003" name="Mol. Biol. Evol.">
        <title>The basic helix-loop-helix transcription factor family in plants: a genome-wide study of protein structure and functional diversity.</title>
        <authorList>
            <person name="Heim M.A."/>
            <person name="Jakoby M."/>
            <person name="Werber M."/>
            <person name="Martin C."/>
            <person name="Weisshaar B."/>
            <person name="Bailey P.C."/>
        </authorList>
    </citation>
    <scope>NUCLEOTIDE SEQUENCE [MRNA] (ISOFORM 2)</scope>
    <scope>TISSUE SPECIFICITY</scope>
    <scope>GENE FAMILY</scope>
    <scope>NOMENCLATURE</scope>
    <source>
        <strain>cv. Columbia</strain>
        <tissue>Stem</tissue>
    </source>
</reference>
<reference key="2">
    <citation type="journal article" date="2000" name="Nature">
        <title>Sequence and analysis of chromosome 3 of the plant Arabidopsis thaliana.</title>
        <authorList>
            <person name="Salanoubat M."/>
            <person name="Lemcke K."/>
            <person name="Rieger M."/>
            <person name="Ansorge W."/>
            <person name="Unseld M."/>
            <person name="Fartmann B."/>
            <person name="Valle G."/>
            <person name="Bloecker H."/>
            <person name="Perez-Alonso M."/>
            <person name="Obermaier B."/>
            <person name="Delseny M."/>
            <person name="Boutry M."/>
            <person name="Grivell L.A."/>
            <person name="Mache R."/>
            <person name="Puigdomenech P."/>
            <person name="De Simone V."/>
            <person name="Choisne N."/>
            <person name="Artiguenave F."/>
            <person name="Robert C."/>
            <person name="Brottier P."/>
            <person name="Wincker P."/>
            <person name="Cattolico L."/>
            <person name="Weissenbach J."/>
            <person name="Saurin W."/>
            <person name="Quetier F."/>
            <person name="Schaefer M."/>
            <person name="Mueller-Auer S."/>
            <person name="Gabel C."/>
            <person name="Fuchs M."/>
            <person name="Benes V."/>
            <person name="Wurmbach E."/>
            <person name="Drzonek H."/>
            <person name="Erfle H."/>
            <person name="Jordan N."/>
            <person name="Bangert S."/>
            <person name="Wiedelmann R."/>
            <person name="Kranz H."/>
            <person name="Voss H."/>
            <person name="Holland R."/>
            <person name="Brandt P."/>
            <person name="Nyakatura G."/>
            <person name="Vezzi A."/>
            <person name="D'Angelo M."/>
            <person name="Pallavicini A."/>
            <person name="Toppo S."/>
            <person name="Simionati B."/>
            <person name="Conrad A."/>
            <person name="Hornischer K."/>
            <person name="Kauer G."/>
            <person name="Loehnert T.-H."/>
            <person name="Nordsiek G."/>
            <person name="Reichelt J."/>
            <person name="Scharfe M."/>
            <person name="Schoen O."/>
            <person name="Bargues M."/>
            <person name="Terol J."/>
            <person name="Climent J."/>
            <person name="Navarro P."/>
            <person name="Collado C."/>
            <person name="Perez-Perez A."/>
            <person name="Ottenwaelder B."/>
            <person name="Duchemin D."/>
            <person name="Cooke R."/>
            <person name="Laudie M."/>
            <person name="Berger-Llauro C."/>
            <person name="Purnelle B."/>
            <person name="Masuy D."/>
            <person name="de Haan M."/>
            <person name="Maarse A.C."/>
            <person name="Alcaraz J.-P."/>
            <person name="Cottet A."/>
            <person name="Casacuberta E."/>
            <person name="Monfort A."/>
            <person name="Argiriou A."/>
            <person name="Flores M."/>
            <person name="Liguori R."/>
            <person name="Vitale D."/>
            <person name="Mannhaupt G."/>
            <person name="Haase D."/>
            <person name="Schoof H."/>
            <person name="Rudd S."/>
            <person name="Zaccaria P."/>
            <person name="Mewes H.-W."/>
            <person name="Mayer K.F.X."/>
            <person name="Kaul S."/>
            <person name="Town C.D."/>
            <person name="Koo H.L."/>
            <person name="Tallon L.J."/>
            <person name="Jenkins J."/>
            <person name="Rooney T."/>
            <person name="Rizzo M."/>
            <person name="Walts A."/>
            <person name="Utterback T."/>
            <person name="Fujii C.Y."/>
            <person name="Shea T.P."/>
            <person name="Creasy T.H."/>
            <person name="Haas B."/>
            <person name="Maiti R."/>
            <person name="Wu D."/>
            <person name="Peterson J."/>
            <person name="Van Aken S."/>
            <person name="Pai G."/>
            <person name="Militscher J."/>
            <person name="Sellers P."/>
            <person name="Gill J.E."/>
            <person name="Feldblyum T.V."/>
            <person name="Preuss D."/>
            <person name="Lin X."/>
            <person name="Nierman W.C."/>
            <person name="Salzberg S.L."/>
            <person name="White O."/>
            <person name="Venter J.C."/>
            <person name="Fraser C.M."/>
            <person name="Kaneko T."/>
            <person name="Nakamura Y."/>
            <person name="Sato S."/>
            <person name="Kato T."/>
            <person name="Asamizu E."/>
            <person name="Sasamoto S."/>
            <person name="Kimura T."/>
            <person name="Idesawa K."/>
            <person name="Kawashima K."/>
            <person name="Kishida Y."/>
            <person name="Kiyokawa C."/>
            <person name="Kohara M."/>
            <person name="Matsumoto M."/>
            <person name="Matsuno A."/>
            <person name="Muraki A."/>
            <person name="Nakayama S."/>
            <person name="Nakazaki N."/>
            <person name="Shinpo S."/>
            <person name="Takeuchi C."/>
            <person name="Wada T."/>
            <person name="Watanabe A."/>
            <person name="Yamada M."/>
            <person name="Yasuda M."/>
            <person name="Tabata S."/>
        </authorList>
    </citation>
    <scope>NUCLEOTIDE SEQUENCE [LARGE SCALE GENOMIC DNA]</scope>
    <source>
        <strain>cv. Columbia</strain>
    </source>
</reference>
<reference key="3">
    <citation type="journal article" date="2017" name="Plant J.">
        <title>Araport11: a complete reannotation of the Arabidopsis thaliana reference genome.</title>
        <authorList>
            <person name="Cheng C.Y."/>
            <person name="Krishnakumar V."/>
            <person name="Chan A.P."/>
            <person name="Thibaud-Nissen F."/>
            <person name="Schobel S."/>
            <person name="Town C.D."/>
        </authorList>
    </citation>
    <scope>GENOME REANNOTATION</scope>
    <source>
        <strain>cv. Columbia</strain>
    </source>
</reference>
<reference key="4">
    <citation type="journal article" date="2002" name="Science">
        <title>Functional annotation of a full-length Arabidopsis cDNA collection.</title>
        <authorList>
            <person name="Seki M."/>
            <person name="Narusaka M."/>
            <person name="Kamiya A."/>
            <person name="Ishida J."/>
            <person name="Satou M."/>
            <person name="Sakurai T."/>
            <person name="Nakajima M."/>
            <person name="Enju A."/>
            <person name="Akiyama K."/>
            <person name="Oono Y."/>
            <person name="Muramatsu M."/>
            <person name="Hayashizaki Y."/>
            <person name="Kawai J."/>
            <person name="Carninci P."/>
            <person name="Itoh M."/>
            <person name="Ishii Y."/>
            <person name="Arakawa T."/>
            <person name="Shibata K."/>
            <person name="Shinagawa A."/>
            <person name="Shinozaki K."/>
        </authorList>
    </citation>
    <scope>NUCLEOTIDE SEQUENCE [LARGE SCALE MRNA] (ISOFORM 2)</scope>
    <source>
        <strain>cv. Columbia</strain>
    </source>
</reference>
<reference key="5">
    <citation type="journal article" date="2003" name="Science">
        <title>Empirical analysis of transcriptional activity in the Arabidopsis genome.</title>
        <authorList>
            <person name="Yamada K."/>
            <person name="Lim J."/>
            <person name="Dale J.M."/>
            <person name="Chen H."/>
            <person name="Shinn P."/>
            <person name="Palm C.J."/>
            <person name="Southwick A.M."/>
            <person name="Wu H.C."/>
            <person name="Kim C.J."/>
            <person name="Nguyen M."/>
            <person name="Pham P.K."/>
            <person name="Cheuk R.F."/>
            <person name="Karlin-Newmann G."/>
            <person name="Liu S.X."/>
            <person name="Lam B."/>
            <person name="Sakano H."/>
            <person name="Wu T."/>
            <person name="Yu G."/>
            <person name="Miranda M."/>
            <person name="Quach H.L."/>
            <person name="Tripp M."/>
            <person name="Chang C.H."/>
            <person name="Lee J.M."/>
            <person name="Toriumi M.J."/>
            <person name="Chan M.M."/>
            <person name="Tang C.C."/>
            <person name="Onodera C.S."/>
            <person name="Deng J.M."/>
            <person name="Akiyama K."/>
            <person name="Ansari Y."/>
            <person name="Arakawa T."/>
            <person name="Banh J."/>
            <person name="Banno F."/>
            <person name="Bowser L."/>
            <person name="Brooks S.Y."/>
            <person name="Carninci P."/>
            <person name="Chao Q."/>
            <person name="Choy N."/>
            <person name="Enju A."/>
            <person name="Goldsmith A.D."/>
            <person name="Gurjal M."/>
            <person name="Hansen N.F."/>
            <person name="Hayashizaki Y."/>
            <person name="Johnson-Hopson C."/>
            <person name="Hsuan V.W."/>
            <person name="Iida K."/>
            <person name="Karnes M."/>
            <person name="Khan S."/>
            <person name="Koesema E."/>
            <person name="Ishida J."/>
            <person name="Jiang P.X."/>
            <person name="Jones T."/>
            <person name="Kawai J."/>
            <person name="Kamiya A."/>
            <person name="Meyers C."/>
            <person name="Nakajima M."/>
            <person name="Narusaka M."/>
            <person name="Seki M."/>
            <person name="Sakurai T."/>
            <person name="Satou M."/>
            <person name="Tamse R."/>
            <person name="Vaysberg M."/>
            <person name="Wallender E.K."/>
            <person name="Wong C."/>
            <person name="Yamamura Y."/>
            <person name="Yuan S."/>
            <person name="Shinozaki K."/>
            <person name="Davis R.W."/>
            <person name="Theologis A."/>
            <person name="Ecker J.R."/>
        </authorList>
    </citation>
    <scope>NUCLEOTIDE SEQUENCE [LARGE SCALE MRNA] (ISOFORM 2)</scope>
    <source>
        <strain>cv. Columbia</strain>
    </source>
</reference>
<reference key="6">
    <citation type="journal article" date="2004" name="Plant Physiol.">
        <title>Genome-wide ORFeome cloning and analysis of Arabidopsis transcription factor genes.</title>
        <authorList>
            <person name="Gong W."/>
            <person name="Shen Y.-P."/>
            <person name="Ma L.-G."/>
            <person name="Pan Y."/>
            <person name="Du Y.-L."/>
            <person name="Wang D.-H."/>
            <person name="Yang J.-Y."/>
            <person name="Hu L.-D."/>
            <person name="Liu X.-F."/>
            <person name="Dong C.-X."/>
            <person name="Ma L."/>
            <person name="Chen Y.-H."/>
            <person name="Yang X.-Y."/>
            <person name="Gao Y."/>
            <person name="Zhu D."/>
            <person name="Tan X."/>
            <person name="Mu J.-Y."/>
            <person name="Zhang D.-B."/>
            <person name="Liu Y.-L."/>
            <person name="Dinesh-Kumar S.P."/>
            <person name="Li Y."/>
            <person name="Wang X.-P."/>
            <person name="Gu H.-Y."/>
            <person name="Qu L.-J."/>
            <person name="Bai S.-N."/>
            <person name="Lu Y.-T."/>
            <person name="Li J.-Y."/>
            <person name="Zhao J.-D."/>
            <person name="Zuo J."/>
            <person name="Huang H."/>
            <person name="Deng X.-W."/>
            <person name="Zhu Y.-X."/>
        </authorList>
    </citation>
    <scope>NUCLEOTIDE SEQUENCE [LARGE SCALE MRNA] (ISOFORM 1)</scope>
    <source>
        <strain>cv. Columbia</strain>
    </source>
</reference>
<reference key="7">
    <citation type="submission" date="2002-03" db="EMBL/GenBank/DDBJ databases">
        <title>Full-length cDNA from Arabidopsis thaliana.</title>
        <authorList>
            <person name="Brover V.V."/>
            <person name="Troukhan M.E."/>
            <person name="Alexandrov N.A."/>
            <person name="Lu Y.-P."/>
            <person name="Flavell R.B."/>
            <person name="Feldmann K.A."/>
        </authorList>
    </citation>
    <scope>NUCLEOTIDE SEQUENCE [LARGE SCALE MRNA] (ISOFORM 1)</scope>
</reference>
<reference key="8">
    <citation type="journal article" date="2003" name="Plant Cell">
        <title>The Arabidopsis basic/helix-loop-helix transcription factor family.</title>
        <authorList>
            <person name="Toledo-Ortiz G."/>
            <person name="Huq E."/>
            <person name="Quail P.H."/>
        </authorList>
    </citation>
    <scope>GENE FAMILY</scope>
</reference>
<reference key="9">
    <citation type="journal article" date="2003" name="Plant Cell">
        <title>Update on the basic helix-loop-helix transcription factor gene family in Arabidopsis thaliana.</title>
        <authorList>
            <person name="Bailey P.C."/>
            <person name="Martin C."/>
            <person name="Toledo-Ortiz G."/>
            <person name="Quail P.H."/>
            <person name="Huq E."/>
            <person name="Heim M.A."/>
            <person name="Jakoby M."/>
            <person name="Werber M."/>
            <person name="Weisshaar B."/>
        </authorList>
    </citation>
    <scope>GENE FAMILY</scope>
    <scope>NOMENCLATURE</scope>
</reference>
<sequence>MERFQGHINPCFFDRKPDVRSLEVQGFAEAQSFAFKEKEEESLQDTVPFLQMLQSEDPSSFFSIKEPNFLTLLSLQTLKEPWELERYLSLEDSQFHSPVQSETNRFMEGANQAVSSQEIPFSQANMTLPSSTSSPLSAHSRRKRKINHLLPQEMTREKRKRRKTKPSKNNEEIENQRINHIAVERNRRRQMNEHINSLRALLPPSYIQRGDQASIVGGAINYVKVLEQIIQSLESQKRTQQQSNSEVVENALNHLSGISSNDLWTTLEDQTCIPKIEATVIQNHVSLKVQCEKKQGQLLKGIISLEKLKLTVLHLNITTSSHSSVSYSFNLKMEDECDLESADEITAAVHRIFDIPTI</sequence>